<protein>
    <recommendedName>
        <fullName evidence="1">Large ribosomal subunit protein uL24</fullName>
    </recommendedName>
    <alternativeName>
        <fullName evidence="2">50S ribosomal protein L24</fullName>
    </alternativeName>
</protein>
<feature type="chain" id="PRO_0000241669" description="Large ribosomal subunit protein uL24">
    <location>
        <begin position="1"/>
        <end position="101"/>
    </location>
</feature>
<accession>Q5M2C4</accession>
<keyword id="KW-1185">Reference proteome</keyword>
<keyword id="KW-0687">Ribonucleoprotein</keyword>
<keyword id="KW-0689">Ribosomal protein</keyword>
<keyword id="KW-0694">RNA-binding</keyword>
<keyword id="KW-0699">rRNA-binding</keyword>
<dbReference type="EMBL" id="CP000023">
    <property type="protein sequence ID" value="AAV61521.1"/>
    <property type="molecule type" value="Genomic_DNA"/>
</dbReference>
<dbReference type="RefSeq" id="WP_002946158.1">
    <property type="nucleotide sequence ID" value="NC_006448.1"/>
</dbReference>
<dbReference type="SMR" id="Q5M2C4"/>
<dbReference type="STRING" id="264199.stu1923"/>
<dbReference type="GeneID" id="66899651"/>
<dbReference type="KEGG" id="stl:stu1923"/>
<dbReference type="eggNOG" id="COG0198">
    <property type="taxonomic scope" value="Bacteria"/>
</dbReference>
<dbReference type="HOGENOM" id="CLU_093315_2_0_9"/>
<dbReference type="Proteomes" id="UP000001170">
    <property type="component" value="Chromosome"/>
</dbReference>
<dbReference type="GO" id="GO:1990904">
    <property type="term" value="C:ribonucleoprotein complex"/>
    <property type="evidence" value="ECO:0007669"/>
    <property type="project" value="UniProtKB-KW"/>
</dbReference>
<dbReference type="GO" id="GO:0005840">
    <property type="term" value="C:ribosome"/>
    <property type="evidence" value="ECO:0007669"/>
    <property type="project" value="UniProtKB-KW"/>
</dbReference>
<dbReference type="GO" id="GO:0019843">
    <property type="term" value="F:rRNA binding"/>
    <property type="evidence" value="ECO:0007669"/>
    <property type="project" value="UniProtKB-UniRule"/>
</dbReference>
<dbReference type="GO" id="GO:0003735">
    <property type="term" value="F:structural constituent of ribosome"/>
    <property type="evidence" value="ECO:0007669"/>
    <property type="project" value="InterPro"/>
</dbReference>
<dbReference type="GO" id="GO:0006412">
    <property type="term" value="P:translation"/>
    <property type="evidence" value="ECO:0007669"/>
    <property type="project" value="UniProtKB-UniRule"/>
</dbReference>
<dbReference type="CDD" id="cd06089">
    <property type="entry name" value="KOW_RPL26"/>
    <property type="match status" value="1"/>
</dbReference>
<dbReference type="FunFam" id="2.30.30.30:FF:000004">
    <property type="entry name" value="50S ribosomal protein L24"/>
    <property type="match status" value="1"/>
</dbReference>
<dbReference type="Gene3D" id="2.30.30.30">
    <property type="match status" value="1"/>
</dbReference>
<dbReference type="HAMAP" id="MF_01326_B">
    <property type="entry name" value="Ribosomal_uL24_B"/>
    <property type="match status" value="1"/>
</dbReference>
<dbReference type="InterPro" id="IPR005824">
    <property type="entry name" value="KOW"/>
</dbReference>
<dbReference type="InterPro" id="IPR014722">
    <property type="entry name" value="Rib_uL2_dom2"/>
</dbReference>
<dbReference type="InterPro" id="IPR003256">
    <property type="entry name" value="Ribosomal_uL24"/>
</dbReference>
<dbReference type="InterPro" id="IPR005825">
    <property type="entry name" value="Ribosomal_uL24_CS"/>
</dbReference>
<dbReference type="InterPro" id="IPR041988">
    <property type="entry name" value="Ribosomal_uL24_KOW"/>
</dbReference>
<dbReference type="InterPro" id="IPR008991">
    <property type="entry name" value="Translation_prot_SH3-like_sf"/>
</dbReference>
<dbReference type="NCBIfam" id="TIGR01079">
    <property type="entry name" value="rplX_bact"/>
    <property type="match status" value="1"/>
</dbReference>
<dbReference type="PANTHER" id="PTHR12903">
    <property type="entry name" value="MITOCHONDRIAL RIBOSOMAL PROTEIN L24"/>
    <property type="match status" value="1"/>
</dbReference>
<dbReference type="Pfam" id="PF00467">
    <property type="entry name" value="KOW"/>
    <property type="match status" value="1"/>
</dbReference>
<dbReference type="Pfam" id="PF17136">
    <property type="entry name" value="ribosomal_L24"/>
    <property type="match status" value="1"/>
</dbReference>
<dbReference type="SMART" id="SM00739">
    <property type="entry name" value="KOW"/>
    <property type="match status" value="1"/>
</dbReference>
<dbReference type="SUPFAM" id="SSF50104">
    <property type="entry name" value="Translation proteins SH3-like domain"/>
    <property type="match status" value="1"/>
</dbReference>
<dbReference type="PROSITE" id="PS01108">
    <property type="entry name" value="RIBOSOMAL_L24"/>
    <property type="match status" value="1"/>
</dbReference>
<proteinExistence type="inferred from homology"/>
<comment type="function">
    <text evidence="1">One of two assembly initiator proteins, it binds directly to the 5'-end of the 23S rRNA, where it nucleates assembly of the 50S subunit.</text>
</comment>
<comment type="function">
    <text evidence="1">One of the proteins that surrounds the polypeptide exit tunnel on the outside of the subunit.</text>
</comment>
<comment type="subunit">
    <text evidence="1">Part of the 50S ribosomal subunit.</text>
</comment>
<comment type="similarity">
    <text evidence="1">Belongs to the universal ribosomal protein uL24 family.</text>
</comment>
<gene>
    <name evidence="1" type="primary">rplX</name>
    <name type="ordered locus">stu1923</name>
</gene>
<name>RL24_STRT2</name>
<reference key="1">
    <citation type="journal article" date="2004" name="Nat. Biotechnol.">
        <title>Complete sequence and comparative genome analysis of the dairy bacterium Streptococcus thermophilus.</title>
        <authorList>
            <person name="Bolotin A."/>
            <person name="Quinquis B."/>
            <person name="Renault P."/>
            <person name="Sorokin A."/>
            <person name="Ehrlich S.D."/>
            <person name="Kulakauskas S."/>
            <person name="Lapidus A."/>
            <person name="Goltsman E."/>
            <person name="Mazur M."/>
            <person name="Pusch G.D."/>
            <person name="Fonstein M."/>
            <person name="Overbeek R."/>
            <person name="Kyprides N."/>
            <person name="Purnelle B."/>
            <person name="Prozzi D."/>
            <person name="Ngui K."/>
            <person name="Masuy D."/>
            <person name="Hancy F."/>
            <person name="Burteau S."/>
            <person name="Boutry M."/>
            <person name="Delcour J."/>
            <person name="Goffeau A."/>
            <person name="Hols P."/>
        </authorList>
    </citation>
    <scope>NUCLEOTIDE SEQUENCE [LARGE SCALE GENOMIC DNA]</scope>
    <source>
        <strain>ATCC BAA-250 / LMG 18311</strain>
    </source>
</reference>
<sequence>MFVKKGDKVRVIAGKDKGTEAVVLKALPKVNKVVVEGVAIIKKHQKPSTENPQGAIVEKEAPIHASNVQVLDKNGVAGRVGYKVVDGKKVRYNKKSGEVLD</sequence>
<organism>
    <name type="scientific">Streptococcus thermophilus (strain ATCC BAA-250 / LMG 18311)</name>
    <dbReference type="NCBI Taxonomy" id="264199"/>
    <lineage>
        <taxon>Bacteria</taxon>
        <taxon>Bacillati</taxon>
        <taxon>Bacillota</taxon>
        <taxon>Bacilli</taxon>
        <taxon>Lactobacillales</taxon>
        <taxon>Streptococcaceae</taxon>
        <taxon>Streptococcus</taxon>
    </lineage>
</organism>
<evidence type="ECO:0000255" key="1">
    <source>
        <dbReference type="HAMAP-Rule" id="MF_01326"/>
    </source>
</evidence>
<evidence type="ECO:0000305" key="2"/>